<sequence>MKKDDSLKKFKYKVAAFYNFISIIDEEILLIKEELTNLATNQKIKGTILLASEGVNGTICGTENAIVLFIETLENLLKVSDINVKYSWCERQAFRRFKARKKKEIVTIGLKEINPTKSVGKYIKAGEWNQFLEDPDSVVIDTRNDYEIKIGNFAGALNPQTSSFREFPAWVQKHLKPLIEENPSLKIGMYCTGGIRCEKATSYLIEEGFSDVHHLEGGILKYLEDVSSENSLWNGECFVFDQRVSLDHELLPGSHRMCHACGLPISPEDLKKPTYIKGLQCDACVNKFTDSDRARFAERQRQIDEIMKRLPENSIWPSS</sequence>
<gene>
    <name evidence="1" type="primary">trhO</name>
    <name type="ordered locus">NATL1_14861</name>
</gene>
<name>TRHO_PROM1</name>
<organism>
    <name type="scientific">Prochlorococcus marinus (strain NATL1A)</name>
    <dbReference type="NCBI Taxonomy" id="167555"/>
    <lineage>
        <taxon>Bacteria</taxon>
        <taxon>Bacillati</taxon>
        <taxon>Cyanobacteriota</taxon>
        <taxon>Cyanophyceae</taxon>
        <taxon>Synechococcales</taxon>
        <taxon>Prochlorococcaceae</taxon>
        <taxon>Prochlorococcus</taxon>
    </lineage>
</organism>
<dbReference type="EC" id="1.14.-.-" evidence="1"/>
<dbReference type="EMBL" id="CP000553">
    <property type="protein sequence ID" value="ABM76043.1"/>
    <property type="molecule type" value="Genomic_DNA"/>
</dbReference>
<dbReference type="RefSeq" id="WP_011824068.1">
    <property type="nucleotide sequence ID" value="NC_008819.1"/>
</dbReference>
<dbReference type="SMR" id="A2C3I3"/>
<dbReference type="KEGG" id="pme:NATL1_14861"/>
<dbReference type="eggNOG" id="COG1054">
    <property type="taxonomic scope" value="Bacteria"/>
</dbReference>
<dbReference type="HOGENOM" id="CLU_038878_0_0_3"/>
<dbReference type="Proteomes" id="UP000002592">
    <property type="component" value="Chromosome"/>
</dbReference>
<dbReference type="GO" id="GO:0016705">
    <property type="term" value="F:oxidoreductase activity, acting on paired donors, with incorporation or reduction of molecular oxygen"/>
    <property type="evidence" value="ECO:0007669"/>
    <property type="project" value="UniProtKB-UniRule"/>
</dbReference>
<dbReference type="GO" id="GO:0006400">
    <property type="term" value="P:tRNA modification"/>
    <property type="evidence" value="ECO:0007669"/>
    <property type="project" value="UniProtKB-UniRule"/>
</dbReference>
<dbReference type="CDD" id="cd01518">
    <property type="entry name" value="RHOD_YceA"/>
    <property type="match status" value="1"/>
</dbReference>
<dbReference type="Gene3D" id="3.40.250.10">
    <property type="entry name" value="Rhodanese-like domain"/>
    <property type="match status" value="1"/>
</dbReference>
<dbReference type="HAMAP" id="MF_00469">
    <property type="entry name" value="TrhO"/>
    <property type="match status" value="1"/>
</dbReference>
<dbReference type="InterPro" id="IPR001763">
    <property type="entry name" value="Rhodanese-like_dom"/>
</dbReference>
<dbReference type="InterPro" id="IPR036873">
    <property type="entry name" value="Rhodanese-like_dom_sf"/>
</dbReference>
<dbReference type="InterPro" id="IPR020936">
    <property type="entry name" value="TrhO"/>
</dbReference>
<dbReference type="InterPro" id="IPR040503">
    <property type="entry name" value="TRHO_N"/>
</dbReference>
<dbReference type="NCBIfam" id="NF001136">
    <property type="entry name" value="PRK00142.1-4"/>
    <property type="match status" value="1"/>
</dbReference>
<dbReference type="PANTHER" id="PTHR43268:SF3">
    <property type="entry name" value="RHODANESE-LIKE DOMAIN-CONTAINING PROTEIN 7-RELATED"/>
    <property type="match status" value="1"/>
</dbReference>
<dbReference type="PANTHER" id="PTHR43268">
    <property type="entry name" value="THIOSULFATE SULFURTRANSFERASE/RHODANESE-LIKE DOMAIN-CONTAINING PROTEIN 2"/>
    <property type="match status" value="1"/>
</dbReference>
<dbReference type="Pfam" id="PF00581">
    <property type="entry name" value="Rhodanese"/>
    <property type="match status" value="1"/>
</dbReference>
<dbReference type="Pfam" id="PF17773">
    <property type="entry name" value="UPF0176_N"/>
    <property type="match status" value="1"/>
</dbReference>
<dbReference type="SMART" id="SM00450">
    <property type="entry name" value="RHOD"/>
    <property type="match status" value="1"/>
</dbReference>
<dbReference type="SUPFAM" id="SSF52821">
    <property type="entry name" value="Rhodanese/Cell cycle control phosphatase"/>
    <property type="match status" value="1"/>
</dbReference>
<dbReference type="PROSITE" id="PS50206">
    <property type="entry name" value="RHODANESE_3"/>
    <property type="match status" value="1"/>
</dbReference>
<feature type="chain" id="PRO_1000013754" description="tRNA uridine(34) hydroxylase">
    <location>
        <begin position="1"/>
        <end position="319"/>
    </location>
</feature>
<feature type="domain" description="Rhodanese" evidence="1">
    <location>
        <begin position="133"/>
        <end position="231"/>
    </location>
</feature>
<feature type="active site" description="Cysteine persulfide intermediate" evidence="1">
    <location>
        <position position="191"/>
    </location>
</feature>
<comment type="function">
    <text evidence="1">Catalyzes oxygen-dependent 5-hydroxyuridine (ho5U) modification at position 34 in tRNAs.</text>
</comment>
<comment type="catalytic activity">
    <reaction evidence="1">
        <text>uridine(34) in tRNA + AH2 + O2 = 5-hydroxyuridine(34) in tRNA + A + H2O</text>
        <dbReference type="Rhea" id="RHEA:64224"/>
        <dbReference type="Rhea" id="RHEA-COMP:11727"/>
        <dbReference type="Rhea" id="RHEA-COMP:13381"/>
        <dbReference type="ChEBI" id="CHEBI:13193"/>
        <dbReference type="ChEBI" id="CHEBI:15377"/>
        <dbReference type="ChEBI" id="CHEBI:15379"/>
        <dbReference type="ChEBI" id="CHEBI:17499"/>
        <dbReference type="ChEBI" id="CHEBI:65315"/>
        <dbReference type="ChEBI" id="CHEBI:136877"/>
    </reaction>
</comment>
<comment type="similarity">
    <text evidence="1">Belongs to the TrhO family.</text>
</comment>
<evidence type="ECO:0000255" key="1">
    <source>
        <dbReference type="HAMAP-Rule" id="MF_00469"/>
    </source>
</evidence>
<proteinExistence type="inferred from homology"/>
<reference key="1">
    <citation type="journal article" date="2007" name="PLoS Genet.">
        <title>Patterns and implications of gene gain and loss in the evolution of Prochlorococcus.</title>
        <authorList>
            <person name="Kettler G.C."/>
            <person name="Martiny A.C."/>
            <person name="Huang K."/>
            <person name="Zucker J."/>
            <person name="Coleman M.L."/>
            <person name="Rodrigue S."/>
            <person name="Chen F."/>
            <person name="Lapidus A."/>
            <person name="Ferriera S."/>
            <person name="Johnson J."/>
            <person name="Steglich C."/>
            <person name="Church G.M."/>
            <person name="Richardson P."/>
            <person name="Chisholm S.W."/>
        </authorList>
    </citation>
    <scope>NUCLEOTIDE SEQUENCE [LARGE SCALE GENOMIC DNA]</scope>
    <source>
        <strain>NATL1A</strain>
    </source>
</reference>
<accession>A2C3I3</accession>
<keyword id="KW-0560">Oxidoreductase</keyword>
<keyword id="KW-0819">tRNA processing</keyword>
<protein>
    <recommendedName>
        <fullName evidence="1">tRNA uridine(34) hydroxylase</fullName>
        <ecNumber evidence="1">1.14.-.-</ecNumber>
    </recommendedName>
    <alternativeName>
        <fullName evidence="1">tRNA hydroxylation protein O</fullName>
    </alternativeName>
</protein>